<comment type="catalytic activity">
    <reaction>
        <text>L-aspartate + ATP = 4-phospho-L-aspartate + ADP</text>
        <dbReference type="Rhea" id="RHEA:23776"/>
        <dbReference type="ChEBI" id="CHEBI:29991"/>
        <dbReference type="ChEBI" id="CHEBI:30616"/>
        <dbReference type="ChEBI" id="CHEBI:57535"/>
        <dbReference type="ChEBI" id="CHEBI:456216"/>
        <dbReference type="EC" id="2.7.2.4"/>
    </reaction>
</comment>
<comment type="pathway">
    <text>Amino-acid biosynthesis; L-lysine biosynthesis via DAP pathway; (S)-tetrahydrodipicolinate from L-aspartate: step 1/4.</text>
</comment>
<comment type="pathway">
    <text>Amino-acid biosynthesis; L-methionine biosynthesis via de novo pathway; L-homoserine from L-aspartate: step 1/3.</text>
</comment>
<comment type="pathway">
    <text>Amino-acid biosynthesis; L-threonine biosynthesis; L-threonine from L-aspartate: step 1/5.</text>
</comment>
<comment type="similarity">
    <text evidence="2">Belongs to the aspartokinase family.</text>
</comment>
<gene>
    <name type="primary">lysC</name>
    <name type="ordered locus">HP_1229</name>
</gene>
<dbReference type="EC" id="2.7.2.4"/>
<dbReference type="EMBL" id="AE000511">
    <property type="protein sequence ID" value="AAD08274.1"/>
    <property type="molecule type" value="Genomic_DNA"/>
</dbReference>
<dbReference type="PIR" id="E64673">
    <property type="entry name" value="E64673"/>
</dbReference>
<dbReference type="RefSeq" id="NP_208021.1">
    <property type="nucleotide sequence ID" value="NC_000915.1"/>
</dbReference>
<dbReference type="RefSeq" id="WP_000909679.1">
    <property type="nucleotide sequence ID" value="NC_018939.1"/>
</dbReference>
<dbReference type="SMR" id="O25827"/>
<dbReference type="FunCoup" id="O25827">
    <property type="interactions" value="381"/>
</dbReference>
<dbReference type="STRING" id="85962.HP_1229"/>
<dbReference type="PaxDb" id="85962-C694_06345"/>
<dbReference type="EnsemblBacteria" id="AAD08274">
    <property type="protein sequence ID" value="AAD08274"/>
    <property type="gene ID" value="HP_1229"/>
</dbReference>
<dbReference type="KEGG" id="heo:C694_06345"/>
<dbReference type="KEGG" id="hpy:HP_1229"/>
<dbReference type="PATRIC" id="fig|85962.47.peg.1317"/>
<dbReference type="eggNOG" id="COG0527">
    <property type="taxonomic scope" value="Bacteria"/>
</dbReference>
<dbReference type="InParanoid" id="O25827"/>
<dbReference type="OrthoDB" id="9799110at2"/>
<dbReference type="PhylomeDB" id="O25827"/>
<dbReference type="UniPathway" id="UPA00034">
    <property type="reaction ID" value="UER00015"/>
</dbReference>
<dbReference type="UniPathway" id="UPA00050">
    <property type="reaction ID" value="UER00461"/>
</dbReference>
<dbReference type="UniPathway" id="UPA00051">
    <property type="reaction ID" value="UER00462"/>
</dbReference>
<dbReference type="Proteomes" id="UP000000429">
    <property type="component" value="Chromosome"/>
</dbReference>
<dbReference type="GO" id="GO:0005829">
    <property type="term" value="C:cytosol"/>
    <property type="evidence" value="ECO:0000318"/>
    <property type="project" value="GO_Central"/>
</dbReference>
<dbReference type="GO" id="GO:0004072">
    <property type="term" value="F:aspartate kinase activity"/>
    <property type="evidence" value="ECO:0000318"/>
    <property type="project" value="GO_Central"/>
</dbReference>
<dbReference type="GO" id="GO:0005524">
    <property type="term" value="F:ATP binding"/>
    <property type="evidence" value="ECO:0007669"/>
    <property type="project" value="UniProtKB-KW"/>
</dbReference>
<dbReference type="GO" id="GO:0019877">
    <property type="term" value="P:diaminopimelate biosynthetic process"/>
    <property type="evidence" value="ECO:0007669"/>
    <property type="project" value="UniProtKB-KW"/>
</dbReference>
<dbReference type="GO" id="GO:0009090">
    <property type="term" value="P:homoserine biosynthetic process"/>
    <property type="evidence" value="ECO:0000318"/>
    <property type="project" value="GO_Central"/>
</dbReference>
<dbReference type="GO" id="GO:0009089">
    <property type="term" value="P:lysine biosynthetic process via diaminopimelate"/>
    <property type="evidence" value="ECO:0000318"/>
    <property type="project" value="GO_Central"/>
</dbReference>
<dbReference type="GO" id="GO:0009088">
    <property type="term" value="P:threonine biosynthetic process"/>
    <property type="evidence" value="ECO:0007669"/>
    <property type="project" value="UniProtKB-UniPathway"/>
</dbReference>
<dbReference type="CDD" id="cd04261">
    <property type="entry name" value="AAK_AKii-LysC-BS"/>
    <property type="match status" value="1"/>
</dbReference>
<dbReference type="CDD" id="cd04923">
    <property type="entry name" value="ACT_AK-LysC-DapG-like_2"/>
    <property type="match status" value="1"/>
</dbReference>
<dbReference type="CDD" id="cd04913">
    <property type="entry name" value="ACT_AKii-LysC-BS-like_1"/>
    <property type="match status" value="1"/>
</dbReference>
<dbReference type="FunFam" id="3.30.2130.10:FF:000002">
    <property type="entry name" value="Aspartokinase"/>
    <property type="match status" value="1"/>
</dbReference>
<dbReference type="FunFam" id="3.40.1160.10:FF:000002">
    <property type="entry name" value="Aspartokinase"/>
    <property type="match status" value="1"/>
</dbReference>
<dbReference type="Gene3D" id="3.40.1160.10">
    <property type="entry name" value="Acetylglutamate kinase-like"/>
    <property type="match status" value="1"/>
</dbReference>
<dbReference type="Gene3D" id="3.30.2130.10">
    <property type="entry name" value="VC0802-like"/>
    <property type="match status" value="1"/>
</dbReference>
<dbReference type="InterPro" id="IPR036393">
    <property type="entry name" value="AceGlu_kinase-like_sf"/>
</dbReference>
<dbReference type="InterPro" id="IPR045865">
    <property type="entry name" value="ACT-like_dom_sf"/>
</dbReference>
<dbReference type="InterPro" id="IPR054352">
    <property type="entry name" value="ACT_Aspartokinase"/>
</dbReference>
<dbReference type="InterPro" id="IPR002912">
    <property type="entry name" value="ACT_dom"/>
</dbReference>
<dbReference type="InterPro" id="IPR041740">
    <property type="entry name" value="AKii-LysC-BS"/>
</dbReference>
<dbReference type="InterPro" id="IPR001048">
    <property type="entry name" value="Asp/Glu/Uridylate_kinase"/>
</dbReference>
<dbReference type="InterPro" id="IPR005260">
    <property type="entry name" value="Asp_kin_monofn"/>
</dbReference>
<dbReference type="InterPro" id="IPR001341">
    <property type="entry name" value="Asp_kinase"/>
</dbReference>
<dbReference type="InterPro" id="IPR018042">
    <property type="entry name" value="Aspartate_kinase_CS"/>
</dbReference>
<dbReference type="NCBIfam" id="TIGR00656">
    <property type="entry name" value="asp_kin_monofn"/>
    <property type="match status" value="1"/>
</dbReference>
<dbReference type="NCBIfam" id="TIGR00657">
    <property type="entry name" value="asp_kinases"/>
    <property type="match status" value="1"/>
</dbReference>
<dbReference type="NCBIfam" id="NF005154">
    <property type="entry name" value="PRK06635.1-2"/>
    <property type="match status" value="1"/>
</dbReference>
<dbReference type="NCBIfam" id="NF005155">
    <property type="entry name" value="PRK06635.1-4"/>
    <property type="match status" value="1"/>
</dbReference>
<dbReference type="PANTHER" id="PTHR21499">
    <property type="entry name" value="ASPARTATE KINASE"/>
    <property type="match status" value="1"/>
</dbReference>
<dbReference type="PANTHER" id="PTHR21499:SF3">
    <property type="entry name" value="ASPARTOKINASE"/>
    <property type="match status" value="1"/>
</dbReference>
<dbReference type="Pfam" id="PF00696">
    <property type="entry name" value="AA_kinase"/>
    <property type="match status" value="1"/>
</dbReference>
<dbReference type="Pfam" id="PF01842">
    <property type="entry name" value="ACT"/>
    <property type="match status" value="1"/>
</dbReference>
<dbReference type="Pfam" id="PF22468">
    <property type="entry name" value="ACT_9"/>
    <property type="match status" value="1"/>
</dbReference>
<dbReference type="PIRSF" id="PIRSF000726">
    <property type="entry name" value="Asp_kin"/>
    <property type="match status" value="1"/>
</dbReference>
<dbReference type="SUPFAM" id="SSF55021">
    <property type="entry name" value="ACT-like"/>
    <property type="match status" value="2"/>
</dbReference>
<dbReference type="SUPFAM" id="SSF53633">
    <property type="entry name" value="Carbamate kinase-like"/>
    <property type="match status" value="1"/>
</dbReference>
<dbReference type="PROSITE" id="PS51671">
    <property type="entry name" value="ACT"/>
    <property type="match status" value="1"/>
</dbReference>
<dbReference type="PROSITE" id="PS00324">
    <property type="entry name" value="ASPARTOKINASE"/>
    <property type="match status" value="1"/>
</dbReference>
<feature type="chain" id="PRO_0000066677" description="Aspartokinase">
    <location>
        <begin position="1"/>
        <end position="405"/>
    </location>
</feature>
<feature type="domain" description="ACT 1" evidence="1">
    <location>
        <begin position="267"/>
        <end position="344"/>
    </location>
</feature>
<feature type="domain" description="ACT 2" evidence="1">
    <location>
        <begin position="345"/>
        <end position="405"/>
    </location>
</feature>
<sequence>MLIVQKYGGTSMGSIERIHNVAQRVLESVTLGHQVVVVVSAMSGETDRLLEFGKNFSHNPNKREMDRIVSVGELVSSAALSMALERYGHRAISLSGKEAGILTSSHFQNAVIQSIDTKRITELLEKNYIVVIAGFQGADIQGETTTLGRGGSDLSAVALAGALKAHLCEIYTDVDGVYTTDPRIEEKAQKIAQISYDEMLELASMGAKVLLNRSVELAKKLSVKLVTRNSFNHSEGTLIVAEKDFKGERMETPIVSGIALDKNQARVSMEGVEDRPGIAAEIFGALAEYRINVDMIVQTIGRDGKTDLDFTIVKTQIEETKQALKPFLAQMDSIDYDENIAKVSIVGVGMKSHSGVASIAFKALAKDNINIMMISTSEIKISVLIDIKYAELAVRTLHAVYQLDQ</sequence>
<keyword id="KW-0028">Amino-acid biosynthesis</keyword>
<keyword id="KW-0067">ATP-binding</keyword>
<keyword id="KW-0220">Diaminopimelate biosynthesis</keyword>
<keyword id="KW-0418">Kinase</keyword>
<keyword id="KW-0457">Lysine biosynthesis</keyword>
<keyword id="KW-0547">Nucleotide-binding</keyword>
<keyword id="KW-1185">Reference proteome</keyword>
<keyword id="KW-0677">Repeat</keyword>
<keyword id="KW-0808">Transferase</keyword>
<organism>
    <name type="scientific">Helicobacter pylori (strain ATCC 700392 / 26695)</name>
    <name type="common">Campylobacter pylori</name>
    <dbReference type="NCBI Taxonomy" id="85962"/>
    <lineage>
        <taxon>Bacteria</taxon>
        <taxon>Pseudomonadati</taxon>
        <taxon>Campylobacterota</taxon>
        <taxon>Epsilonproteobacteria</taxon>
        <taxon>Campylobacterales</taxon>
        <taxon>Helicobacteraceae</taxon>
        <taxon>Helicobacter</taxon>
    </lineage>
</organism>
<reference key="1">
    <citation type="journal article" date="1997" name="Nature">
        <title>The complete genome sequence of the gastric pathogen Helicobacter pylori.</title>
        <authorList>
            <person name="Tomb J.-F."/>
            <person name="White O."/>
            <person name="Kerlavage A.R."/>
            <person name="Clayton R.A."/>
            <person name="Sutton G.G."/>
            <person name="Fleischmann R.D."/>
            <person name="Ketchum K.A."/>
            <person name="Klenk H.-P."/>
            <person name="Gill S.R."/>
            <person name="Dougherty B.A."/>
            <person name="Nelson K.E."/>
            <person name="Quackenbush J."/>
            <person name="Zhou L."/>
            <person name="Kirkness E.F."/>
            <person name="Peterson S.N."/>
            <person name="Loftus B.J."/>
            <person name="Richardson D.L."/>
            <person name="Dodson R.J."/>
            <person name="Khalak H.G."/>
            <person name="Glodek A."/>
            <person name="McKenney K."/>
            <person name="FitzGerald L.M."/>
            <person name="Lee N."/>
            <person name="Adams M.D."/>
            <person name="Hickey E.K."/>
            <person name="Berg D.E."/>
            <person name="Gocayne J.D."/>
            <person name="Utterback T.R."/>
            <person name="Peterson J.D."/>
            <person name="Kelley J.M."/>
            <person name="Cotton M.D."/>
            <person name="Weidman J.F."/>
            <person name="Fujii C."/>
            <person name="Bowman C."/>
            <person name="Watthey L."/>
            <person name="Wallin E."/>
            <person name="Hayes W.S."/>
            <person name="Borodovsky M."/>
            <person name="Karp P.D."/>
            <person name="Smith H.O."/>
            <person name="Fraser C.M."/>
            <person name="Venter J.C."/>
        </authorList>
    </citation>
    <scope>NUCLEOTIDE SEQUENCE [LARGE SCALE GENOMIC DNA]</scope>
    <source>
        <strain>ATCC 700392 / 26695</strain>
    </source>
</reference>
<protein>
    <recommendedName>
        <fullName>Aspartokinase</fullName>
        <ecNumber>2.7.2.4</ecNumber>
    </recommendedName>
    <alternativeName>
        <fullName>Aspartate kinase</fullName>
    </alternativeName>
</protein>
<accession>O25827</accession>
<evidence type="ECO:0000255" key="1">
    <source>
        <dbReference type="PROSITE-ProRule" id="PRU01007"/>
    </source>
</evidence>
<evidence type="ECO:0000305" key="2"/>
<name>AK_HELPY</name>
<proteinExistence type="inferred from homology"/>